<accession>Q9HZM7</accession>
<comment type="function">
    <text evidence="1">Cell wall formation.</text>
</comment>
<comment type="catalytic activity">
    <reaction evidence="1">
        <text>UDP-N-acetyl-alpha-D-muramate + NADP(+) = UDP-N-acetyl-3-O-(1-carboxyvinyl)-alpha-D-glucosamine + NADPH + H(+)</text>
        <dbReference type="Rhea" id="RHEA:12248"/>
        <dbReference type="ChEBI" id="CHEBI:15378"/>
        <dbReference type="ChEBI" id="CHEBI:57783"/>
        <dbReference type="ChEBI" id="CHEBI:58349"/>
        <dbReference type="ChEBI" id="CHEBI:68483"/>
        <dbReference type="ChEBI" id="CHEBI:70757"/>
        <dbReference type="EC" id="1.3.1.98"/>
    </reaction>
</comment>
<comment type="cofactor">
    <cofactor evidence="1">
        <name>FAD</name>
        <dbReference type="ChEBI" id="CHEBI:57692"/>
    </cofactor>
</comment>
<comment type="pathway">
    <text evidence="1">Cell wall biogenesis; peptidoglycan biosynthesis.</text>
</comment>
<comment type="subcellular location">
    <subcellularLocation>
        <location evidence="1">Cytoplasm</location>
    </subcellularLocation>
</comment>
<comment type="similarity">
    <text evidence="1">Belongs to the MurB family.</text>
</comment>
<sequence length="339" mass="37628">MSLELQEHCSLKPYNTFGIDVRARLLAHARDEADVREALALARERGLPLLVIGGGSNLLLTRDVEALVLRMASQGRRIVSDAADSVLVEAEAGEAWDPFVQWSLERGLAGLENLSLIPGTVGAAPMQNIGAYGVELKDVFDSLTALDRQDGTLREFDRQACRFGYRDSLFKQEPDRWLILRVRLRLTRRERLHLDYGPVRQRLEEEGIASPTARDVSRVICAIRREKLPDPAVLGNAGSFFKNPLVDATQAERLRQAFPDLVGYPQADGRLKLAAGWLIDKGGWKGFRDGPVGVHAQQALVLVNHGGATGAQVRALAERIQEDVRRRFGVELEPEPNLY</sequence>
<reference key="1">
    <citation type="journal article" date="2000" name="Nature">
        <title>Complete genome sequence of Pseudomonas aeruginosa PAO1, an opportunistic pathogen.</title>
        <authorList>
            <person name="Stover C.K."/>
            <person name="Pham X.-Q.T."/>
            <person name="Erwin A.L."/>
            <person name="Mizoguchi S.D."/>
            <person name="Warrener P."/>
            <person name="Hickey M.J."/>
            <person name="Brinkman F.S.L."/>
            <person name="Hufnagle W.O."/>
            <person name="Kowalik D.J."/>
            <person name="Lagrou M."/>
            <person name="Garber R.L."/>
            <person name="Goltry L."/>
            <person name="Tolentino E."/>
            <person name="Westbrock-Wadman S."/>
            <person name="Yuan Y."/>
            <person name="Brody L.L."/>
            <person name="Coulter S.N."/>
            <person name="Folger K.R."/>
            <person name="Kas A."/>
            <person name="Larbig K."/>
            <person name="Lim R.M."/>
            <person name="Smith K.A."/>
            <person name="Spencer D.H."/>
            <person name="Wong G.K.-S."/>
            <person name="Wu Z."/>
            <person name="Paulsen I.T."/>
            <person name="Reizer J."/>
            <person name="Saier M.H. Jr."/>
            <person name="Hancock R.E.W."/>
            <person name="Lory S."/>
            <person name="Olson M.V."/>
        </authorList>
    </citation>
    <scope>NUCLEOTIDE SEQUENCE [LARGE SCALE GENOMIC DNA]</scope>
    <source>
        <strain>ATCC 15692 / DSM 22644 / CIP 104116 / JCM 14847 / LMG 12228 / 1C / PRS 101 / PAO1</strain>
    </source>
</reference>
<keyword id="KW-0002">3D-structure</keyword>
<keyword id="KW-0131">Cell cycle</keyword>
<keyword id="KW-0132">Cell division</keyword>
<keyword id="KW-0133">Cell shape</keyword>
<keyword id="KW-0961">Cell wall biogenesis/degradation</keyword>
<keyword id="KW-0963">Cytoplasm</keyword>
<keyword id="KW-0274">FAD</keyword>
<keyword id="KW-0285">Flavoprotein</keyword>
<keyword id="KW-0521">NADP</keyword>
<keyword id="KW-0560">Oxidoreductase</keyword>
<keyword id="KW-0573">Peptidoglycan synthesis</keyword>
<keyword id="KW-1185">Reference proteome</keyword>
<proteinExistence type="evidence at protein level"/>
<evidence type="ECO:0000255" key="1">
    <source>
        <dbReference type="HAMAP-Rule" id="MF_00037"/>
    </source>
</evidence>
<evidence type="ECO:0007829" key="2">
    <source>
        <dbReference type="PDB" id="4JAY"/>
    </source>
</evidence>
<evidence type="ECO:0007829" key="3">
    <source>
        <dbReference type="PDB" id="7OR2"/>
    </source>
</evidence>
<evidence type="ECO:0007829" key="4">
    <source>
        <dbReference type="PDB" id="7ORZ"/>
    </source>
</evidence>
<protein>
    <recommendedName>
        <fullName evidence="1">UDP-N-acetylenolpyruvoylglucosamine reductase</fullName>
        <ecNumber evidence="1">1.3.1.98</ecNumber>
    </recommendedName>
    <alternativeName>
        <fullName evidence="1">UDP-N-acetylmuramate dehydrogenase</fullName>
    </alternativeName>
</protein>
<dbReference type="EC" id="1.3.1.98" evidence="1"/>
<dbReference type="EMBL" id="AE004091">
    <property type="protein sequence ID" value="AAG06365.1"/>
    <property type="molecule type" value="Genomic_DNA"/>
</dbReference>
<dbReference type="PIR" id="A83274">
    <property type="entry name" value="A83274"/>
</dbReference>
<dbReference type="RefSeq" id="NP_251667.1">
    <property type="nucleotide sequence ID" value="NC_002516.2"/>
</dbReference>
<dbReference type="RefSeq" id="WP_003106928.1">
    <property type="nucleotide sequence ID" value="NZ_QZGE01000009.1"/>
</dbReference>
<dbReference type="PDB" id="4JAY">
    <property type="method" value="X-ray"/>
    <property type="resolution" value="2.23 A"/>
    <property type="chains" value="A/B/C/D=1-339"/>
</dbReference>
<dbReference type="PDB" id="4JB1">
    <property type="method" value="X-ray"/>
    <property type="resolution" value="2.10 A"/>
    <property type="chains" value="A=1-339"/>
</dbReference>
<dbReference type="PDB" id="7OR2">
    <property type="method" value="X-ray"/>
    <property type="resolution" value="2.35 A"/>
    <property type="chains" value="A=3-339"/>
</dbReference>
<dbReference type="PDB" id="7ORZ">
    <property type="method" value="X-ray"/>
    <property type="resolution" value="1.85 A"/>
    <property type="chains" value="A=3-339"/>
</dbReference>
<dbReference type="PDB" id="7OSQ">
    <property type="method" value="X-ray"/>
    <property type="resolution" value="2.07 A"/>
    <property type="chains" value="A=1-339"/>
</dbReference>
<dbReference type="PDBsum" id="4JAY"/>
<dbReference type="PDBsum" id="4JB1"/>
<dbReference type="PDBsum" id="7OR2"/>
<dbReference type="PDBsum" id="7ORZ"/>
<dbReference type="PDBsum" id="7OSQ"/>
<dbReference type="SMR" id="Q9HZM7"/>
<dbReference type="FunCoup" id="Q9HZM7">
    <property type="interactions" value="588"/>
</dbReference>
<dbReference type="STRING" id="208964.PA2977"/>
<dbReference type="PaxDb" id="208964-PA2977"/>
<dbReference type="GeneID" id="880517"/>
<dbReference type="KEGG" id="pae:PA2977"/>
<dbReference type="PATRIC" id="fig|208964.12.peg.3124"/>
<dbReference type="PseudoCAP" id="PA2977"/>
<dbReference type="HOGENOM" id="CLU_035304_0_0_6"/>
<dbReference type="InParanoid" id="Q9HZM7"/>
<dbReference type="OrthoDB" id="9804753at2"/>
<dbReference type="PhylomeDB" id="Q9HZM7"/>
<dbReference type="BioCyc" id="PAER208964:G1FZ6-3029-MONOMER"/>
<dbReference type="BRENDA" id="1.3.1.98">
    <property type="organism ID" value="5087"/>
</dbReference>
<dbReference type="UniPathway" id="UPA00219"/>
<dbReference type="EvolutionaryTrace" id="Q9HZM7"/>
<dbReference type="Proteomes" id="UP000002438">
    <property type="component" value="Chromosome"/>
</dbReference>
<dbReference type="GO" id="GO:0005829">
    <property type="term" value="C:cytosol"/>
    <property type="evidence" value="ECO:0000318"/>
    <property type="project" value="GO_Central"/>
</dbReference>
<dbReference type="GO" id="GO:0071949">
    <property type="term" value="F:FAD binding"/>
    <property type="evidence" value="ECO:0007669"/>
    <property type="project" value="InterPro"/>
</dbReference>
<dbReference type="GO" id="GO:0050660">
    <property type="term" value="F:flavin adenine dinucleotide binding"/>
    <property type="evidence" value="ECO:0000318"/>
    <property type="project" value="GO_Central"/>
</dbReference>
<dbReference type="GO" id="GO:0008762">
    <property type="term" value="F:UDP-N-acetylmuramate dehydrogenase activity"/>
    <property type="evidence" value="ECO:0000318"/>
    <property type="project" value="GO_Central"/>
</dbReference>
<dbReference type="GO" id="GO:0051301">
    <property type="term" value="P:cell division"/>
    <property type="evidence" value="ECO:0007669"/>
    <property type="project" value="UniProtKB-KW"/>
</dbReference>
<dbReference type="GO" id="GO:0071555">
    <property type="term" value="P:cell wall organization"/>
    <property type="evidence" value="ECO:0000318"/>
    <property type="project" value="GO_Central"/>
</dbReference>
<dbReference type="GO" id="GO:0009252">
    <property type="term" value="P:peptidoglycan biosynthetic process"/>
    <property type="evidence" value="ECO:0007669"/>
    <property type="project" value="UniProtKB-UniRule"/>
</dbReference>
<dbReference type="GO" id="GO:0008360">
    <property type="term" value="P:regulation of cell shape"/>
    <property type="evidence" value="ECO:0007669"/>
    <property type="project" value="UniProtKB-KW"/>
</dbReference>
<dbReference type="Gene3D" id="3.30.465.10">
    <property type="match status" value="1"/>
</dbReference>
<dbReference type="Gene3D" id="3.90.78.10">
    <property type="entry name" value="UDP-N-acetylenolpyruvoylglucosamine reductase, C-terminal domain"/>
    <property type="match status" value="1"/>
</dbReference>
<dbReference type="Gene3D" id="3.30.43.10">
    <property type="entry name" value="Uridine Diphospho-n-acetylenolpyruvylglucosamine Reductase, domain 2"/>
    <property type="match status" value="1"/>
</dbReference>
<dbReference type="HAMAP" id="MF_00037">
    <property type="entry name" value="MurB"/>
    <property type="match status" value="1"/>
</dbReference>
<dbReference type="InterPro" id="IPR016166">
    <property type="entry name" value="FAD-bd_PCMH"/>
</dbReference>
<dbReference type="InterPro" id="IPR036318">
    <property type="entry name" value="FAD-bd_PCMH-like_sf"/>
</dbReference>
<dbReference type="InterPro" id="IPR016167">
    <property type="entry name" value="FAD-bd_PCMH_sub1"/>
</dbReference>
<dbReference type="InterPro" id="IPR016169">
    <property type="entry name" value="FAD-bd_PCMH_sub2"/>
</dbReference>
<dbReference type="InterPro" id="IPR003170">
    <property type="entry name" value="MurB"/>
</dbReference>
<dbReference type="InterPro" id="IPR011601">
    <property type="entry name" value="MurB_C"/>
</dbReference>
<dbReference type="InterPro" id="IPR036635">
    <property type="entry name" value="MurB_C_sf"/>
</dbReference>
<dbReference type="InterPro" id="IPR006094">
    <property type="entry name" value="Oxid_FAD_bind_N"/>
</dbReference>
<dbReference type="NCBIfam" id="TIGR00179">
    <property type="entry name" value="murB"/>
    <property type="match status" value="1"/>
</dbReference>
<dbReference type="NCBIfam" id="NF000755">
    <property type="entry name" value="PRK00046.1"/>
    <property type="match status" value="1"/>
</dbReference>
<dbReference type="NCBIfam" id="NF010478">
    <property type="entry name" value="PRK13903.1"/>
    <property type="match status" value="1"/>
</dbReference>
<dbReference type="PANTHER" id="PTHR21071">
    <property type="entry name" value="UDP-N-ACETYLENOLPYRUVOYLGLUCOSAMINE REDUCTASE"/>
    <property type="match status" value="1"/>
</dbReference>
<dbReference type="PANTHER" id="PTHR21071:SF4">
    <property type="entry name" value="UDP-N-ACETYLENOLPYRUVOYLGLUCOSAMINE REDUCTASE"/>
    <property type="match status" value="1"/>
</dbReference>
<dbReference type="Pfam" id="PF01565">
    <property type="entry name" value="FAD_binding_4"/>
    <property type="match status" value="1"/>
</dbReference>
<dbReference type="Pfam" id="PF02873">
    <property type="entry name" value="MurB_C"/>
    <property type="match status" value="1"/>
</dbReference>
<dbReference type="SUPFAM" id="SSF56176">
    <property type="entry name" value="FAD-binding/transporter-associated domain-like"/>
    <property type="match status" value="1"/>
</dbReference>
<dbReference type="SUPFAM" id="SSF56194">
    <property type="entry name" value="Uridine diphospho-N-Acetylenolpyruvylglucosamine reductase, MurB, C-terminal domain"/>
    <property type="match status" value="1"/>
</dbReference>
<dbReference type="PROSITE" id="PS51387">
    <property type="entry name" value="FAD_PCMH"/>
    <property type="match status" value="1"/>
</dbReference>
<feature type="chain" id="PRO_0000179242" description="UDP-N-acetylenolpyruvoylglucosamine reductase">
    <location>
        <begin position="1"/>
        <end position="339"/>
    </location>
</feature>
<feature type="domain" description="FAD-binding PCMH-type" evidence="1">
    <location>
        <begin position="18"/>
        <end position="189"/>
    </location>
</feature>
<feature type="active site" evidence="1">
    <location>
        <position position="166"/>
    </location>
</feature>
<feature type="active site" description="Proton donor" evidence="1">
    <location>
        <position position="239"/>
    </location>
</feature>
<feature type="active site" evidence="1">
    <location>
        <position position="335"/>
    </location>
</feature>
<feature type="strand" evidence="4">
    <location>
        <begin position="6"/>
        <end position="10"/>
    </location>
</feature>
<feature type="helix" evidence="4">
    <location>
        <begin position="12"/>
        <end position="14"/>
    </location>
</feature>
<feature type="strand" evidence="4">
    <location>
        <begin position="22"/>
        <end position="29"/>
    </location>
</feature>
<feature type="helix" evidence="4">
    <location>
        <begin position="32"/>
        <end position="44"/>
    </location>
</feature>
<feature type="strand" evidence="4">
    <location>
        <begin position="49"/>
        <end position="55"/>
    </location>
</feature>
<feature type="strand" evidence="2">
    <location>
        <begin position="56"/>
        <end position="60"/>
    </location>
</feature>
<feature type="strand" evidence="4">
    <location>
        <begin position="64"/>
        <end position="71"/>
    </location>
</feature>
<feature type="strand" evidence="4">
    <location>
        <begin position="76"/>
        <end position="81"/>
    </location>
</feature>
<feature type="strand" evidence="4">
    <location>
        <begin position="83"/>
        <end position="91"/>
    </location>
</feature>
<feature type="helix" evidence="4">
    <location>
        <begin position="96"/>
        <end position="105"/>
    </location>
</feature>
<feature type="strand" evidence="4">
    <location>
        <begin position="109"/>
        <end position="111"/>
    </location>
</feature>
<feature type="helix" evidence="4">
    <location>
        <begin position="112"/>
        <end position="114"/>
    </location>
</feature>
<feature type="turn" evidence="4">
    <location>
        <begin position="121"/>
        <end position="128"/>
    </location>
</feature>
<feature type="helix" evidence="4">
    <location>
        <begin position="136"/>
        <end position="138"/>
    </location>
</feature>
<feature type="strand" evidence="4">
    <location>
        <begin position="140"/>
        <end position="150"/>
    </location>
</feature>
<feature type="strand" evidence="4">
    <location>
        <begin position="153"/>
        <end position="157"/>
    </location>
</feature>
<feature type="helix" evidence="4">
    <location>
        <begin position="159"/>
        <end position="161"/>
    </location>
</feature>
<feature type="helix" evidence="4">
    <location>
        <begin position="169"/>
        <end position="172"/>
    </location>
</feature>
<feature type="turn" evidence="4">
    <location>
        <begin position="174"/>
        <end position="176"/>
    </location>
</feature>
<feature type="strand" evidence="4">
    <location>
        <begin position="177"/>
        <end position="189"/>
    </location>
</feature>
<feature type="helix" evidence="4">
    <location>
        <begin position="198"/>
        <end position="205"/>
    </location>
</feature>
<feature type="helix" evidence="4">
    <location>
        <begin position="213"/>
        <end position="227"/>
    </location>
</feature>
<feature type="turn" evidence="4">
    <location>
        <begin position="231"/>
        <end position="233"/>
    </location>
</feature>
<feature type="helix" evidence="4">
    <location>
        <begin position="248"/>
        <end position="257"/>
    </location>
</feature>
<feature type="strand" evidence="4">
    <location>
        <begin position="263"/>
        <end position="265"/>
    </location>
</feature>
<feature type="strand" evidence="3">
    <location>
        <begin position="267"/>
        <end position="269"/>
    </location>
</feature>
<feature type="strand" evidence="4">
    <location>
        <begin position="271"/>
        <end position="273"/>
    </location>
</feature>
<feature type="helix" evidence="4">
    <location>
        <begin position="275"/>
        <end position="281"/>
    </location>
</feature>
<feature type="strand" evidence="4">
    <location>
        <begin position="292"/>
        <end position="294"/>
    </location>
</feature>
<feature type="strand" evidence="4">
    <location>
        <begin position="302"/>
        <end position="304"/>
    </location>
</feature>
<feature type="helix" evidence="4">
    <location>
        <begin position="310"/>
        <end position="328"/>
    </location>
</feature>
<feature type="strand" evidence="4">
    <location>
        <begin position="334"/>
        <end position="338"/>
    </location>
</feature>
<name>MURB_PSEAE</name>
<gene>
    <name evidence="1" type="primary">murB</name>
    <name type="ordered locus">PA2977</name>
</gene>
<organism>
    <name type="scientific">Pseudomonas aeruginosa (strain ATCC 15692 / DSM 22644 / CIP 104116 / JCM 14847 / LMG 12228 / 1C / PRS 101 / PAO1)</name>
    <dbReference type="NCBI Taxonomy" id="208964"/>
    <lineage>
        <taxon>Bacteria</taxon>
        <taxon>Pseudomonadati</taxon>
        <taxon>Pseudomonadota</taxon>
        <taxon>Gammaproteobacteria</taxon>
        <taxon>Pseudomonadales</taxon>
        <taxon>Pseudomonadaceae</taxon>
        <taxon>Pseudomonas</taxon>
    </lineage>
</organism>